<organism>
    <name type="scientific">Citrobacter koseri (strain ATCC BAA-895 / CDC 4225-83 / SGSC4696)</name>
    <dbReference type="NCBI Taxonomy" id="290338"/>
    <lineage>
        <taxon>Bacteria</taxon>
        <taxon>Pseudomonadati</taxon>
        <taxon>Pseudomonadota</taxon>
        <taxon>Gammaproteobacteria</taxon>
        <taxon>Enterobacterales</taxon>
        <taxon>Enterobacteriaceae</taxon>
        <taxon>Citrobacter</taxon>
    </lineage>
</organism>
<name>GLMU_CITK8</name>
<keyword id="KW-0012">Acyltransferase</keyword>
<keyword id="KW-0133">Cell shape</keyword>
<keyword id="KW-0961">Cell wall biogenesis/degradation</keyword>
<keyword id="KW-0963">Cytoplasm</keyword>
<keyword id="KW-0460">Magnesium</keyword>
<keyword id="KW-0479">Metal-binding</keyword>
<keyword id="KW-0511">Multifunctional enzyme</keyword>
<keyword id="KW-0548">Nucleotidyltransferase</keyword>
<keyword id="KW-0573">Peptidoglycan synthesis</keyword>
<keyword id="KW-1185">Reference proteome</keyword>
<keyword id="KW-0677">Repeat</keyword>
<keyword id="KW-0808">Transferase</keyword>
<reference key="1">
    <citation type="submission" date="2007-08" db="EMBL/GenBank/DDBJ databases">
        <authorList>
            <consortium name="The Citrobacter koseri Genome Sequencing Project"/>
            <person name="McClelland M."/>
            <person name="Sanderson E.K."/>
            <person name="Porwollik S."/>
            <person name="Spieth J."/>
            <person name="Clifton W.S."/>
            <person name="Latreille P."/>
            <person name="Courtney L."/>
            <person name="Wang C."/>
            <person name="Pepin K."/>
            <person name="Bhonagiri V."/>
            <person name="Nash W."/>
            <person name="Johnson M."/>
            <person name="Thiruvilangam P."/>
            <person name="Wilson R."/>
        </authorList>
    </citation>
    <scope>NUCLEOTIDE SEQUENCE [LARGE SCALE GENOMIC DNA]</scope>
    <source>
        <strain>ATCC BAA-895 / CDC 4225-83 / SGSC4696</strain>
    </source>
</reference>
<sequence>MLNSAMSVVILAAGKGTRMYSDLPKVLHTLAGKAMVQHVIDAANELGASQVHLVYGHGGDLLKNTLKNDNLNWVLQAEQLGTGHAMQQAAPFFSDDEDILMLYGDVPLISVETLQRLRDAKPQGGIGLLTVKLDDPSGYGRITRENGKVTGIVEHKDATDEQRQIQEINTGILIANGADMKRWLAKLTNNNAQGEYYITDIIALAYQEGREIAAVHPDRLSEVEGVNNRLQLSRLERVYQSEQAEKLLLAGVMLRDPARFDLRGALTHGRDVEIDTNVIIKGNVTLGHRVKIGAGCVIKNSVIGDDCDISPYSVVEDAHLEAACTIGPFARLRPGAELREGAHVGNFVEMKKARLGKGSKAGHLSYLGDAEIGDNVNIGAGTITCNYDGANKFKTIIGDDVFVGSDTQLVAPVTVGKGATIAAGTTVTRDVADNELVLSRVPQVHKQGWQRPAKKK</sequence>
<comment type="function">
    <text evidence="1">Catalyzes the last two sequential reactions in the de novo biosynthetic pathway for UDP-N-acetylglucosamine (UDP-GlcNAc). The C-terminal domain catalyzes the transfer of acetyl group from acetyl coenzyme A to glucosamine-1-phosphate (GlcN-1-P) to produce N-acetylglucosamine-1-phosphate (GlcNAc-1-P), which is converted into UDP-GlcNAc by the transfer of uridine 5-monophosphate (from uridine 5-triphosphate), a reaction catalyzed by the N-terminal domain.</text>
</comment>
<comment type="catalytic activity">
    <reaction evidence="1">
        <text>alpha-D-glucosamine 1-phosphate + acetyl-CoA = N-acetyl-alpha-D-glucosamine 1-phosphate + CoA + H(+)</text>
        <dbReference type="Rhea" id="RHEA:13725"/>
        <dbReference type="ChEBI" id="CHEBI:15378"/>
        <dbReference type="ChEBI" id="CHEBI:57287"/>
        <dbReference type="ChEBI" id="CHEBI:57288"/>
        <dbReference type="ChEBI" id="CHEBI:57776"/>
        <dbReference type="ChEBI" id="CHEBI:58516"/>
        <dbReference type="EC" id="2.3.1.157"/>
    </reaction>
</comment>
<comment type="catalytic activity">
    <reaction evidence="1">
        <text>N-acetyl-alpha-D-glucosamine 1-phosphate + UTP + H(+) = UDP-N-acetyl-alpha-D-glucosamine + diphosphate</text>
        <dbReference type="Rhea" id="RHEA:13509"/>
        <dbReference type="ChEBI" id="CHEBI:15378"/>
        <dbReference type="ChEBI" id="CHEBI:33019"/>
        <dbReference type="ChEBI" id="CHEBI:46398"/>
        <dbReference type="ChEBI" id="CHEBI:57705"/>
        <dbReference type="ChEBI" id="CHEBI:57776"/>
        <dbReference type="EC" id="2.7.7.23"/>
    </reaction>
</comment>
<comment type="cofactor">
    <cofactor evidence="1">
        <name>Mg(2+)</name>
        <dbReference type="ChEBI" id="CHEBI:18420"/>
    </cofactor>
    <text evidence="1">Binds 1 Mg(2+) ion per subunit.</text>
</comment>
<comment type="pathway">
    <text evidence="1">Nucleotide-sugar biosynthesis; UDP-N-acetyl-alpha-D-glucosamine biosynthesis; N-acetyl-alpha-D-glucosamine 1-phosphate from alpha-D-glucosamine 6-phosphate (route II): step 2/2.</text>
</comment>
<comment type="pathway">
    <text evidence="1">Nucleotide-sugar biosynthesis; UDP-N-acetyl-alpha-D-glucosamine biosynthesis; UDP-N-acetyl-alpha-D-glucosamine from N-acetyl-alpha-D-glucosamine 1-phosphate: step 1/1.</text>
</comment>
<comment type="pathway">
    <text evidence="1">Bacterial outer membrane biogenesis; LPS lipid A biosynthesis.</text>
</comment>
<comment type="subunit">
    <text evidence="1">Homotrimer.</text>
</comment>
<comment type="subcellular location">
    <subcellularLocation>
        <location evidence="1">Cytoplasm</location>
    </subcellularLocation>
</comment>
<comment type="similarity">
    <text evidence="1">In the N-terminal section; belongs to the N-acetylglucosamine-1-phosphate uridyltransferase family.</text>
</comment>
<comment type="similarity">
    <text evidence="1">In the C-terminal section; belongs to the transferase hexapeptide repeat family.</text>
</comment>
<dbReference type="EC" id="2.7.7.23" evidence="1"/>
<dbReference type="EC" id="2.3.1.157" evidence="1"/>
<dbReference type="EMBL" id="CP000822">
    <property type="protein sequence ID" value="ABV11246.1"/>
    <property type="molecule type" value="Genomic_DNA"/>
</dbReference>
<dbReference type="RefSeq" id="WP_012000826.1">
    <property type="nucleotide sequence ID" value="NC_009792.1"/>
</dbReference>
<dbReference type="SMR" id="A8ACN3"/>
<dbReference type="STRING" id="290338.CKO_00067"/>
<dbReference type="GeneID" id="45134371"/>
<dbReference type="KEGG" id="cko:CKO_00067"/>
<dbReference type="HOGENOM" id="CLU_029499_15_2_6"/>
<dbReference type="OrthoDB" id="9775031at2"/>
<dbReference type="UniPathway" id="UPA00113">
    <property type="reaction ID" value="UER00532"/>
</dbReference>
<dbReference type="UniPathway" id="UPA00113">
    <property type="reaction ID" value="UER00533"/>
</dbReference>
<dbReference type="UniPathway" id="UPA00973"/>
<dbReference type="Proteomes" id="UP000008148">
    <property type="component" value="Chromosome"/>
</dbReference>
<dbReference type="GO" id="GO:0005737">
    <property type="term" value="C:cytoplasm"/>
    <property type="evidence" value="ECO:0007669"/>
    <property type="project" value="UniProtKB-SubCell"/>
</dbReference>
<dbReference type="GO" id="GO:0016020">
    <property type="term" value="C:membrane"/>
    <property type="evidence" value="ECO:0007669"/>
    <property type="project" value="GOC"/>
</dbReference>
<dbReference type="GO" id="GO:0019134">
    <property type="term" value="F:glucosamine-1-phosphate N-acetyltransferase activity"/>
    <property type="evidence" value="ECO:0007669"/>
    <property type="project" value="UniProtKB-UniRule"/>
</dbReference>
<dbReference type="GO" id="GO:0000287">
    <property type="term" value="F:magnesium ion binding"/>
    <property type="evidence" value="ECO:0007669"/>
    <property type="project" value="UniProtKB-UniRule"/>
</dbReference>
<dbReference type="GO" id="GO:0003977">
    <property type="term" value="F:UDP-N-acetylglucosamine diphosphorylase activity"/>
    <property type="evidence" value="ECO:0007669"/>
    <property type="project" value="UniProtKB-UniRule"/>
</dbReference>
<dbReference type="GO" id="GO:0000902">
    <property type="term" value="P:cell morphogenesis"/>
    <property type="evidence" value="ECO:0007669"/>
    <property type="project" value="UniProtKB-UniRule"/>
</dbReference>
<dbReference type="GO" id="GO:0071555">
    <property type="term" value="P:cell wall organization"/>
    <property type="evidence" value="ECO:0007669"/>
    <property type="project" value="UniProtKB-KW"/>
</dbReference>
<dbReference type="GO" id="GO:0009245">
    <property type="term" value="P:lipid A biosynthetic process"/>
    <property type="evidence" value="ECO:0007669"/>
    <property type="project" value="UniProtKB-UniRule"/>
</dbReference>
<dbReference type="GO" id="GO:0009252">
    <property type="term" value="P:peptidoglycan biosynthetic process"/>
    <property type="evidence" value="ECO:0007669"/>
    <property type="project" value="UniProtKB-UniRule"/>
</dbReference>
<dbReference type="GO" id="GO:0008360">
    <property type="term" value="P:regulation of cell shape"/>
    <property type="evidence" value="ECO:0007669"/>
    <property type="project" value="UniProtKB-KW"/>
</dbReference>
<dbReference type="GO" id="GO:0006048">
    <property type="term" value="P:UDP-N-acetylglucosamine biosynthetic process"/>
    <property type="evidence" value="ECO:0007669"/>
    <property type="project" value="UniProtKB-UniPathway"/>
</dbReference>
<dbReference type="CDD" id="cd02540">
    <property type="entry name" value="GT2_GlmU_N_bac"/>
    <property type="match status" value="1"/>
</dbReference>
<dbReference type="CDD" id="cd03353">
    <property type="entry name" value="LbH_GlmU_C"/>
    <property type="match status" value="1"/>
</dbReference>
<dbReference type="FunFam" id="2.160.10.10:FF:000011">
    <property type="entry name" value="Bifunctional protein GlmU"/>
    <property type="match status" value="1"/>
</dbReference>
<dbReference type="FunFam" id="3.90.550.10:FF:000006">
    <property type="entry name" value="Bifunctional protein GlmU"/>
    <property type="match status" value="1"/>
</dbReference>
<dbReference type="Gene3D" id="2.160.10.10">
    <property type="entry name" value="Hexapeptide repeat proteins"/>
    <property type="match status" value="1"/>
</dbReference>
<dbReference type="Gene3D" id="3.90.550.10">
    <property type="entry name" value="Spore Coat Polysaccharide Biosynthesis Protein SpsA, Chain A"/>
    <property type="match status" value="1"/>
</dbReference>
<dbReference type="HAMAP" id="MF_01631">
    <property type="entry name" value="GlmU"/>
    <property type="match status" value="1"/>
</dbReference>
<dbReference type="InterPro" id="IPR005882">
    <property type="entry name" value="Bifunctional_GlmU"/>
</dbReference>
<dbReference type="InterPro" id="IPR050065">
    <property type="entry name" value="GlmU-like"/>
</dbReference>
<dbReference type="InterPro" id="IPR038009">
    <property type="entry name" value="GlmU_C_LbH"/>
</dbReference>
<dbReference type="InterPro" id="IPR001451">
    <property type="entry name" value="Hexapep"/>
</dbReference>
<dbReference type="InterPro" id="IPR018357">
    <property type="entry name" value="Hexapep_transf_CS"/>
</dbReference>
<dbReference type="InterPro" id="IPR025877">
    <property type="entry name" value="MobA-like_NTP_Trfase"/>
</dbReference>
<dbReference type="InterPro" id="IPR029044">
    <property type="entry name" value="Nucleotide-diphossugar_trans"/>
</dbReference>
<dbReference type="InterPro" id="IPR011004">
    <property type="entry name" value="Trimer_LpxA-like_sf"/>
</dbReference>
<dbReference type="NCBIfam" id="TIGR01173">
    <property type="entry name" value="glmU"/>
    <property type="match status" value="1"/>
</dbReference>
<dbReference type="NCBIfam" id="NF006986">
    <property type="entry name" value="PRK09451.1"/>
    <property type="match status" value="1"/>
</dbReference>
<dbReference type="PANTHER" id="PTHR43584:SF3">
    <property type="entry name" value="BIFUNCTIONAL PROTEIN GLMU"/>
    <property type="match status" value="1"/>
</dbReference>
<dbReference type="PANTHER" id="PTHR43584">
    <property type="entry name" value="NUCLEOTIDYL TRANSFERASE"/>
    <property type="match status" value="1"/>
</dbReference>
<dbReference type="Pfam" id="PF00132">
    <property type="entry name" value="Hexapep"/>
    <property type="match status" value="2"/>
</dbReference>
<dbReference type="Pfam" id="PF12804">
    <property type="entry name" value="NTP_transf_3"/>
    <property type="match status" value="1"/>
</dbReference>
<dbReference type="SUPFAM" id="SSF53448">
    <property type="entry name" value="Nucleotide-diphospho-sugar transferases"/>
    <property type="match status" value="1"/>
</dbReference>
<dbReference type="SUPFAM" id="SSF51161">
    <property type="entry name" value="Trimeric LpxA-like enzymes"/>
    <property type="match status" value="1"/>
</dbReference>
<dbReference type="PROSITE" id="PS00101">
    <property type="entry name" value="HEXAPEP_TRANSFERASES"/>
    <property type="match status" value="1"/>
</dbReference>
<proteinExistence type="inferred from homology"/>
<feature type="chain" id="PRO_1000056149" description="Bifunctional protein GlmU">
    <location>
        <begin position="1"/>
        <end position="456"/>
    </location>
</feature>
<feature type="region of interest" description="Pyrophosphorylase" evidence="1">
    <location>
        <begin position="1"/>
        <end position="229"/>
    </location>
</feature>
<feature type="region of interest" description="Linker" evidence="1">
    <location>
        <begin position="230"/>
        <end position="250"/>
    </location>
</feature>
<feature type="region of interest" description="N-acetyltransferase" evidence="1">
    <location>
        <begin position="251"/>
        <end position="456"/>
    </location>
</feature>
<feature type="active site" description="Proton acceptor" evidence="1">
    <location>
        <position position="363"/>
    </location>
</feature>
<feature type="binding site" evidence="1">
    <location>
        <begin position="11"/>
        <end position="14"/>
    </location>
    <ligand>
        <name>UDP-N-acetyl-alpha-D-glucosamine</name>
        <dbReference type="ChEBI" id="CHEBI:57705"/>
    </ligand>
</feature>
<feature type="binding site" evidence="1">
    <location>
        <position position="25"/>
    </location>
    <ligand>
        <name>UDP-N-acetyl-alpha-D-glucosamine</name>
        <dbReference type="ChEBI" id="CHEBI:57705"/>
    </ligand>
</feature>
<feature type="binding site" evidence="1">
    <location>
        <position position="76"/>
    </location>
    <ligand>
        <name>UDP-N-acetyl-alpha-D-glucosamine</name>
        <dbReference type="ChEBI" id="CHEBI:57705"/>
    </ligand>
</feature>
<feature type="binding site" evidence="1">
    <location>
        <begin position="81"/>
        <end position="82"/>
    </location>
    <ligand>
        <name>UDP-N-acetyl-alpha-D-glucosamine</name>
        <dbReference type="ChEBI" id="CHEBI:57705"/>
    </ligand>
</feature>
<feature type="binding site" evidence="1">
    <location>
        <begin position="103"/>
        <end position="105"/>
    </location>
    <ligand>
        <name>UDP-N-acetyl-alpha-D-glucosamine</name>
        <dbReference type="ChEBI" id="CHEBI:57705"/>
    </ligand>
</feature>
<feature type="binding site" evidence="1">
    <location>
        <position position="105"/>
    </location>
    <ligand>
        <name>Mg(2+)</name>
        <dbReference type="ChEBI" id="CHEBI:18420"/>
    </ligand>
</feature>
<feature type="binding site" evidence="1">
    <location>
        <position position="140"/>
    </location>
    <ligand>
        <name>UDP-N-acetyl-alpha-D-glucosamine</name>
        <dbReference type="ChEBI" id="CHEBI:57705"/>
    </ligand>
</feature>
<feature type="binding site" evidence="1">
    <location>
        <position position="154"/>
    </location>
    <ligand>
        <name>UDP-N-acetyl-alpha-D-glucosamine</name>
        <dbReference type="ChEBI" id="CHEBI:57705"/>
    </ligand>
</feature>
<feature type="binding site" evidence="1">
    <location>
        <position position="169"/>
    </location>
    <ligand>
        <name>UDP-N-acetyl-alpha-D-glucosamine</name>
        <dbReference type="ChEBI" id="CHEBI:57705"/>
    </ligand>
</feature>
<feature type="binding site" evidence="1">
    <location>
        <position position="227"/>
    </location>
    <ligand>
        <name>Mg(2+)</name>
        <dbReference type="ChEBI" id="CHEBI:18420"/>
    </ligand>
</feature>
<feature type="binding site" evidence="1">
    <location>
        <position position="227"/>
    </location>
    <ligand>
        <name>UDP-N-acetyl-alpha-D-glucosamine</name>
        <dbReference type="ChEBI" id="CHEBI:57705"/>
    </ligand>
</feature>
<feature type="binding site" evidence="1">
    <location>
        <position position="333"/>
    </location>
    <ligand>
        <name>UDP-N-acetyl-alpha-D-glucosamine</name>
        <dbReference type="ChEBI" id="CHEBI:57705"/>
    </ligand>
</feature>
<feature type="binding site" evidence="1">
    <location>
        <position position="351"/>
    </location>
    <ligand>
        <name>UDP-N-acetyl-alpha-D-glucosamine</name>
        <dbReference type="ChEBI" id="CHEBI:57705"/>
    </ligand>
</feature>
<feature type="binding site" evidence="1">
    <location>
        <position position="366"/>
    </location>
    <ligand>
        <name>UDP-N-acetyl-alpha-D-glucosamine</name>
        <dbReference type="ChEBI" id="CHEBI:57705"/>
    </ligand>
</feature>
<feature type="binding site" evidence="1">
    <location>
        <position position="377"/>
    </location>
    <ligand>
        <name>UDP-N-acetyl-alpha-D-glucosamine</name>
        <dbReference type="ChEBI" id="CHEBI:57705"/>
    </ligand>
</feature>
<feature type="binding site" evidence="1">
    <location>
        <position position="380"/>
    </location>
    <ligand>
        <name>acetyl-CoA</name>
        <dbReference type="ChEBI" id="CHEBI:57288"/>
    </ligand>
</feature>
<feature type="binding site" evidence="1">
    <location>
        <begin position="386"/>
        <end position="387"/>
    </location>
    <ligand>
        <name>acetyl-CoA</name>
        <dbReference type="ChEBI" id="CHEBI:57288"/>
    </ligand>
</feature>
<feature type="binding site" evidence="1">
    <location>
        <position position="405"/>
    </location>
    <ligand>
        <name>acetyl-CoA</name>
        <dbReference type="ChEBI" id="CHEBI:57288"/>
    </ligand>
</feature>
<feature type="binding site" evidence="1">
    <location>
        <position position="423"/>
    </location>
    <ligand>
        <name>acetyl-CoA</name>
        <dbReference type="ChEBI" id="CHEBI:57288"/>
    </ligand>
</feature>
<feature type="binding site" evidence="1">
    <location>
        <position position="440"/>
    </location>
    <ligand>
        <name>acetyl-CoA</name>
        <dbReference type="ChEBI" id="CHEBI:57288"/>
    </ligand>
</feature>
<accession>A8ACN3</accession>
<gene>
    <name evidence="1" type="primary">glmU</name>
    <name type="ordered locus">CKO_00067</name>
</gene>
<evidence type="ECO:0000255" key="1">
    <source>
        <dbReference type="HAMAP-Rule" id="MF_01631"/>
    </source>
</evidence>
<protein>
    <recommendedName>
        <fullName evidence="1">Bifunctional protein GlmU</fullName>
    </recommendedName>
    <domain>
        <recommendedName>
            <fullName evidence="1">UDP-N-acetylglucosamine pyrophosphorylase</fullName>
            <ecNumber evidence="1">2.7.7.23</ecNumber>
        </recommendedName>
        <alternativeName>
            <fullName evidence="1">N-acetylglucosamine-1-phosphate uridyltransferase</fullName>
        </alternativeName>
    </domain>
    <domain>
        <recommendedName>
            <fullName evidence="1">Glucosamine-1-phosphate N-acetyltransferase</fullName>
            <ecNumber evidence="1">2.3.1.157</ecNumber>
        </recommendedName>
    </domain>
</protein>